<name>YSO1_LEPBY</name>
<dbReference type="EMBL" id="U17609">
    <property type="protein sequence ID" value="AAA69951.1"/>
    <property type="molecule type" value="Genomic_DNA"/>
</dbReference>
<dbReference type="SMR" id="P51586"/>
<dbReference type="GO" id="GO:0000160">
    <property type="term" value="P:phosphorelay signal transduction system"/>
    <property type="evidence" value="ECO:0007669"/>
    <property type="project" value="UniProtKB-KW"/>
</dbReference>
<dbReference type="CDD" id="cd17580">
    <property type="entry name" value="REC_2_DhkD-like"/>
    <property type="match status" value="1"/>
</dbReference>
<dbReference type="Gene3D" id="3.40.50.2300">
    <property type="match status" value="1"/>
</dbReference>
<dbReference type="InterPro" id="IPR050595">
    <property type="entry name" value="Bact_response_regulator"/>
</dbReference>
<dbReference type="InterPro" id="IPR011006">
    <property type="entry name" value="CheY-like_superfamily"/>
</dbReference>
<dbReference type="InterPro" id="IPR001789">
    <property type="entry name" value="Sig_transdc_resp-reg_receiver"/>
</dbReference>
<dbReference type="PANTHER" id="PTHR44591:SF3">
    <property type="entry name" value="RESPONSE REGULATORY DOMAIN-CONTAINING PROTEIN"/>
    <property type="match status" value="1"/>
</dbReference>
<dbReference type="PANTHER" id="PTHR44591">
    <property type="entry name" value="STRESS RESPONSE REGULATOR PROTEIN 1"/>
    <property type="match status" value="1"/>
</dbReference>
<dbReference type="Pfam" id="PF00072">
    <property type="entry name" value="Response_reg"/>
    <property type="match status" value="1"/>
</dbReference>
<dbReference type="SMART" id="SM00448">
    <property type="entry name" value="REC"/>
    <property type="match status" value="1"/>
</dbReference>
<dbReference type="SUPFAM" id="SSF52172">
    <property type="entry name" value="CheY-like"/>
    <property type="match status" value="1"/>
</dbReference>
<dbReference type="PROSITE" id="PS50110">
    <property type="entry name" value="RESPONSE_REGULATORY"/>
    <property type="match status" value="1"/>
</dbReference>
<evidence type="ECO:0000255" key="1">
    <source>
        <dbReference type="PROSITE-ProRule" id="PRU00169"/>
    </source>
</evidence>
<organism>
    <name type="scientific">Leptolyngbya boryana</name>
    <name type="common">Plectonema boryanum</name>
    <dbReference type="NCBI Taxonomy" id="1184"/>
    <lineage>
        <taxon>Bacteria</taxon>
        <taxon>Bacillati</taxon>
        <taxon>Cyanobacteriota</taxon>
        <taxon>Cyanophyceae</taxon>
        <taxon>Leptolyngbyales</taxon>
        <taxon>Leptolyngbyaceae</taxon>
        <taxon>Leptolyngbya group</taxon>
        <taxon>Leptolyngbya</taxon>
    </lineage>
</organism>
<keyword id="KW-0597">Phosphoprotein</keyword>
<keyword id="KW-0804">Transcription</keyword>
<keyword id="KW-0805">Transcription regulation</keyword>
<keyword id="KW-0902">Two-component regulatory system</keyword>
<accession>P51586</accession>
<proteinExistence type="inferred from homology"/>
<feature type="chain" id="PRO_0000081357" description="Uncharacterized 14.6 kDa protein in sodA1 3'region">
    <location>
        <begin position="1"/>
        <end position="131"/>
    </location>
</feature>
<feature type="domain" description="Response regulatory" evidence="1">
    <location>
        <begin position="8"/>
        <end position="124"/>
    </location>
</feature>
<feature type="modified residue" description="4-aspartylphosphate" evidence="1">
    <location>
        <position position="57"/>
    </location>
</feature>
<protein>
    <recommendedName>
        <fullName>Uncharacterized 14.6 kDa protein in sodA1 3'region</fullName>
    </recommendedName>
    <alternativeName>
        <fullName>ORF131</fullName>
    </alternativeName>
</protein>
<sequence length="131" mass="14642">MQTLAQMDILVVDDDPDTRDLLRFMLEDEGAIVTVAPNAKEALSLLERELPKLLVSDVAMPEMDGFELIGRVRELPKGETLPAIALTAYAREEDRQAALRSGFNDYLTKPVDPLELIRLVQQYCLAFPPDA</sequence>
<reference key="1">
    <citation type="journal article" date="1995" name="J. Bacteriol.">
        <title>Characterization of four superoxide dismutase genes from a filamentous cyanobacterium.</title>
        <authorList>
            <person name="Campbell W.S."/>
            <person name="Laudenbach D.E."/>
        </authorList>
    </citation>
    <scope>NUCLEOTIDE SEQUENCE [GENOMIC DNA]</scope>
    <source>
        <strain>UTEX 485 / CCAP 1462/4</strain>
    </source>
</reference>